<name>GRLG_DICDI</name>
<gene>
    <name type="primary">grlG</name>
    <name type="ORF">DDB_G0272244</name>
</gene>
<dbReference type="EMBL" id="AAFI02000008">
    <property type="protein sequence ID" value="EAL71274.1"/>
    <property type="molecule type" value="Genomic_DNA"/>
</dbReference>
<dbReference type="RefSeq" id="XP_645313.1">
    <property type="nucleotide sequence ID" value="XM_640221.1"/>
</dbReference>
<dbReference type="SMR" id="Q75JP4"/>
<dbReference type="FunCoup" id="Q75JP4">
    <property type="interactions" value="11"/>
</dbReference>
<dbReference type="STRING" id="44689.Q75JP4"/>
<dbReference type="GlyCosmos" id="Q75JP4">
    <property type="glycosylation" value="7 sites, No reported glycans"/>
</dbReference>
<dbReference type="GlyGen" id="Q75JP4">
    <property type="glycosylation" value="7 sites"/>
</dbReference>
<dbReference type="PaxDb" id="44689-DDB0231981"/>
<dbReference type="EnsemblProtists" id="EAL71274">
    <property type="protein sequence ID" value="EAL71274"/>
    <property type="gene ID" value="DDB_G0272244"/>
</dbReference>
<dbReference type="GeneID" id="8618479"/>
<dbReference type="KEGG" id="ddi:DDB_G0272244"/>
<dbReference type="dictyBase" id="DDB_G0272244">
    <property type="gene designation" value="far2"/>
</dbReference>
<dbReference type="VEuPathDB" id="AmoebaDB:DDB_G0272244"/>
<dbReference type="eggNOG" id="KOG1055">
    <property type="taxonomic scope" value="Eukaryota"/>
</dbReference>
<dbReference type="HOGENOM" id="CLU_365408_0_0_1"/>
<dbReference type="InParanoid" id="Q75JP4"/>
<dbReference type="OMA" id="WRSEDAN"/>
<dbReference type="PhylomeDB" id="Q75JP4"/>
<dbReference type="PRO" id="PR:Q75JP4"/>
<dbReference type="Proteomes" id="UP000002195">
    <property type="component" value="Chromosome 2"/>
</dbReference>
<dbReference type="GO" id="GO:0005886">
    <property type="term" value="C:plasma membrane"/>
    <property type="evidence" value="ECO:0000318"/>
    <property type="project" value="GO_Central"/>
</dbReference>
<dbReference type="GO" id="GO:0004930">
    <property type="term" value="F:G protein-coupled receptor activity"/>
    <property type="evidence" value="ECO:0000318"/>
    <property type="project" value="GO_Central"/>
</dbReference>
<dbReference type="GO" id="GO:0007186">
    <property type="term" value="P:G protein-coupled receptor signaling pathway"/>
    <property type="evidence" value="ECO:0000318"/>
    <property type="project" value="GO_Central"/>
</dbReference>
<dbReference type="CDD" id="cd15047">
    <property type="entry name" value="7tmC_GABA-B-like"/>
    <property type="match status" value="1"/>
</dbReference>
<dbReference type="Gene3D" id="3.40.50.2300">
    <property type="match status" value="2"/>
</dbReference>
<dbReference type="InterPro" id="IPR017978">
    <property type="entry name" value="GPCR_3_C"/>
</dbReference>
<dbReference type="InterPro" id="IPR051530">
    <property type="entry name" value="mGluR/GABA-B-like"/>
</dbReference>
<dbReference type="InterPro" id="IPR003760">
    <property type="entry name" value="PnrA-like"/>
</dbReference>
<dbReference type="PANTHER" id="PTHR46924:SF3">
    <property type="entry name" value="METABOTROPIC GLUTAMATE RECEPTOR-LIKE PROTEIN C-RELATED"/>
    <property type="match status" value="1"/>
</dbReference>
<dbReference type="PANTHER" id="PTHR46924">
    <property type="entry name" value="METABOTROPIC GLUTAMATE RECEPTOR-LIKE PROTEIN C-RELATED-RELATED"/>
    <property type="match status" value="1"/>
</dbReference>
<dbReference type="Pfam" id="PF00003">
    <property type="entry name" value="7tm_3"/>
    <property type="match status" value="1"/>
</dbReference>
<dbReference type="Pfam" id="PF02608">
    <property type="entry name" value="Bmp"/>
    <property type="match status" value="1"/>
</dbReference>
<dbReference type="PROSITE" id="PS50259">
    <property type="entry name" value="G_PROTEIN_RECEP_F3_4"/>
    <property type="match status" value="1"/>
</dbReference>
<feature type="signal peptide" evidence="1">
    <location>
        <begin position="1"/>
        <end position="23"/>
    </location>
</feature>
<feature type="chain" id="PRO_0000370351" description="Metabotropic glutamate receptor-like protein G">
    <location>
        <begin position="24"/>
        <end position="772"/>
    </location>
</feature>
<feature type="topological domain" description="Extracellular" evidence="1">
    <location>
        <begin position="24"/>
        <end position="391"/>
    </location>
</feature>
<feature type="transmembrane region" description="Helical; Name=1" evidence="1">
    <location>
        <begin position="392"/>
        <end position="412"/>
    </location>
</feature>
<feature type="topological domain" description="Cytoplasmic" evidence="1">
    <location>
        <begin position="413"/>
        <end position="426"/>
    </location>
</feature>
<feature type="transmembrane region" description="Helical; Name=2" evidence="1">
    <location>
        <begin position="427"/>
        <end position="447"/>
    </location>
</feature>
<feature type="topological domain" description="Extracellular" evidence="1">
    <location>
        <begin position="448"/>
        <end position="463"/>
    </location>
</feature>
<feature type="transmembrane region" description="Helical; Name=3" evidence="1">
    <location>
        <begin position="464"/>
        <end position="484"/>
    </location>
</feature>
<feature type="topological domain" description="Cytoplasmic" evidence="1">
    <location>
        <begin position="485"/>
        <end position="500"/>
    </location>
</feature>
<feature type="transmembrane region" description="Helical; Name=4" evidence="1">
    <location>
        <begin position="501"/>
        <end position="521"/>
    </location>
</feature>
<feature type="topological domain" description="Extracellular" evidence="1">
    <location>
        <begin position="522"/>
        <end position="551"/>
    </location>
</feature>
<feature type="transmembrane region" description="Helical; Name=5" evidence="1">
    <location>
        <begin position="552"/>
        <end position="572"/>
    </location>
</feature>
<feature type="topological domain" description="Cytoplasmic" evidence="1">
    <location>
        <begin position="573"/>
        <end position="586"/>
    </location>
</feature>
<feature type="transmembrane region" description="Helical; Name=6" evidence="1">
    <location>
        <begin position="587"/>
        <end position="607"/>
    </location>
</feature>
<feature type="topological domain" description="Extracellular" evidence="1">
    <location>
        <begin position="608"/>
        <end position="616"/>
    </location>
</feature>
<feature type="transmembrane region" description="Helical; Name=7" evidence="1">
    <location>
        <begin position="617"/>
        <end position="637"/>
    </location>
</feature>
<feature type="topological domain" description="Cytoplasmic" evidence="1">
    <location>
        <begin position="638"/>
        <end position="772"/>
    </location>
</feature>
<feature type="region of interest" description="Disordered" evidence="2">
    <location>
        <begin position="664"/>
        <end position="772"/>
    </location>
</feature>
<feature type="compositionally biased region" description="Acidic residues" evidence="2">
    <location>
        <begin position="718"/>
        <end position="728"/>
    </location>
</feature>
<feature type="compositionally biased region" description="Low complexity" evidence="2">
    <location>
        <begin position="740"/>
        <end position="753"/>
    </location>
</feature>
<feature type="compositionally biased region" description="Pro residues" evidence="2">
    <location>
        <begin position="754"/>
        <end position="763"/>
    </location>
</feature>
<feature type="glycosylation site" description="N-linked (GlcNAc...) asparagine" evidence="1">
    <location>
        <position position="73"/>
    </location>
</feature>
<feature type="glycosylation site" description="N-linked (GlcNAc...) asparagine" evidence="1">
    <location>
        <position position="126"/>
    </location>
</feature>
<feature type="glycosylation site" description="N-linked (GlcNAc...) asparagine" evidence="1">
    <location>
        <position position="262"/>
    </location>
</feature>
<feature type="glycosylation site" description="N-linked (GlcNAc...) asparagine" evidence="1">
    <location>
        <position position="313"/>
    </location>
</feature>
<feature type="glycosylation site" description="N-linked (GlcNAc...) asparagine" evidence="1">
    <location>
        <position position="343"/>
    </location>
</feature>
<feature type="glycosylation site" description="N-linked (GlcNAc...) asparagine" evidence="1">
    <location>
        <position position="378"/>
    </location>
</feature>
<feature type="glycosylation site" description="N-linked (GlcNAc...) asparagine" evidence="1">
    <location>
        <position position="546"/>
    </location>
</feature>
<keyword id="KW-0297">G-protein coupled receptor</keyword>
<keyword id="KW-0325">Glycoprotein</keyword>
<keyword id="KW-0472">Membrane</keyword>
<keyword id="KW-0675">Receptor</keyword>
<keyword id="KW-1185">Reference proteome</keyword>
<keyword id="KW-0732">Signal</keyword>
<keyword id="KW-0807">Transducer</keyword>
<keyword id="KW-0812">Transmembrane</keyword>
<keyword id="KW-1133">Transmembrane helix</keyword>
<organism>
    <name type="scientific">Dictyostelium discoideum</name>
    <name type="common">Social amoeba</name>
    <dbReference type="NCBI Taxonomy" id="44689"/>
    <lineage>
        <taxon>Eukaryota</taxon>
        <taxon>Amoebozoa</taxon>
        <taxon>Evosea</taxon>
        <taxon>Eumycetozoa</taxon>
        <taxon>Dictyostelia</taxon>
        <taxon>Dictyosteliales</taxon>
        <taxon>Dictyosteliaceae</taxon>
        <taxon>Dictyostelium</taxon>
    </lineage>
</organism>
<protein>
    <recommendedName>
        <fullName>Metabotropic glutamate receptor-like protein G</fullName>
    </recommendedName>
</protein>
<comment type="subcellular location">
    <subcellularLocation>
        <location evidence="4">Membrane</location>
        <topology evidence="4">Multi-pass membrane protein</topology>
    </subcellularLocation>
</comment>
<comment type="developmental stage">
    <text evidence="3">Increased levels found from the tight aggregation stage onward. Levels stayed high during late development. Clear expression at 24 hours when fruiting body formation is close to completion.</text>
</comment>
<comment type="similarity">
    <text evidence="4">In the N-terminal section; belongs to the BMP lipoprotein family.</text>
</comment>
<comment type="similarity">
    <text evidence="4">In the C-terminal section; belongs to the G-protein coupled receptor 3 family. GABA-B receptor subfamily.</text>
</comment>
<proteinExistence type="evidence at transcript level"/>
<sequence>MKKIIFLVLFLIFIFKDIKSSYGVDLVNFKMITLLSNNFNDLGFNNMLNQGKVNVEKQLGITDTKVYIVDGYNDTKALLLPMVQNEDVDFVMCTSLGHVEACKEIAKMYEGSLTIKTQFMVRGSSNATSNLLQVTYNYASINYISGVFAGLYTKTNKIGFLSPGLLGGSADCFVYAYWLGAKQINPKIEFYYYNIGAFLNSDKTTRATAELLDMGCDVIGDTLDDFSAGNTVISRGFKALGTNGFPQREVYGENVVFSYSYNWTKIFLPIVKNALVKGKPKNNYADFNIDPTLNFYDISYGFDVPQDTKTKINDTISYLKSTPRAIHPTNCNDLMLKYAEKWNLTMSTTYDRTKCIAGSNFFFINEPFPGMTYFGYYNITNTQVKFSPSIQIGVSIVSGVLIAIVLLSMVGVYKYRASSSIRSASPIFLIFILFGALIVFGGIILWVSELNDHVCNGRLWMVTLGFSTLIGSLVVKNFRIWLIFDNPELKTVKITNYQLYPWVACCLVINIILMSILTSLGDLREVDATGIDSLGKYEFLKICKMNNSGASVLYTILAYFGALLLTGVFVSWKIRIVDIEEFNESRAIAHTLYAISFCLFVIVPLMISPLEKQSETIILSVAGLFITTAAVLIIFLPKFYRVYEYGEEGTNEMFKSKKSSNIATARAESHKSSNSGNHRTNRRGNLVSGDFTDDSESSVIEPNQEVADVTSGAVLADFTEESVSEIDENEKNHNDEIELPEINQSEQQNSEIEQPPPPPPPQQIEPDEKNQD</sequence>
<evidence type="ECO:0000255" key="1"/>
<evidence type="ECO:0000256" key="2">
    <source>
        <dbReference type="SAM" id="MobiDB-lite"/>
    </source>
</evidence>
<evidence type="ECO:0000269" key="3">
    <source>
    </source>
</evidence>
<evidence type="ECO:0000305" key="4"/>
<accession>Q75JP4</accession>
<accession>Q559M1</accession>
<reference key="1">
    <citation type="journal article" date="2002" name="Nature">
        <title>Sequence and analysis of chromosome 2 of Dictyostelium discoideum.</title>
        <authorList>
            <person name="Gloeckner G."/>
            <person name="Eichinger L."/>
            <person name="Szafranski K."/>
            <person name="Pachebat J.A."/>
            <person name="Bankier A.T."/>
            <person name="Dear P.H."/>
            <person name="Lehmann R."/>
            <person name="Baumgart C."/>
            <person name="Parra G."/>
            <person name="Abril J.F."/>
            <person name="Guigo R."/>
            <person name="Kumpf K."/>
            <person name="Tunggal B."/>
            <person name="Cox E.C."/>
            <person name="Quail M.A."/>
            <person name="Platzer M."/>
            <person name="Rosenthal A."/>
            <person name="Noegel A.A."/>
        </authorList>
    </citation>
    <scope>NUCLEOTIDE SEQUENCE [LARGE SCALE GENOMIC DNA]</scope>
    <source>
        <strain>AX4</strain>
    </source>
</reference>
<reference key="2">
    <citation type="journal article" date="2005" name="Nature">
        <title>The genome of the social amoeba Dictyostelium discoideum.</title>
        <authorList>
            <person name="Eichinger L."/>
            <person name="Pachebat J.A."/>
            <person name="Gloeckner G."/>
            <person name="Rajandream M.A."/>
            <person name="Sucgang R."/>
            <person name="Berriman M."/>
            <person name="Song J."/>
            <person name="Olsen R."/>
            <person name="Szafranski K."/>
            <person name="Xu Q."/>
            <person name="Tunggal B."/>
            <person name="Kummerfeld S."/>
            <person name="Madera M."/>
            <person name="Konfortov B.A."/>
            <person name="Rivero F."/>
            <person name="Bankier A.T."/>
            <person name="Lehmann R."/>
            <person name="Hamlin N."/>
            <person name="Davies R."/>
            <person name="Gaudet P."/>
            <person name="Fey P."/>
            <person name="Pilcher K."/>
            <person name="Chen G."/>
            <person name="Saunders D."/>
            <person name="Sodergren E.J."/>
            <person name="Davis P."/>
            <person name="Kerhornou A."/>
            <person name="Nie X."/>
            <person name="Hall N."/>
            <person name="Anjard C."/>
            <person name="Hemphill L."/>
            <person name="Bason N."/>
            <person name="Farbrother P."/>
            <person name="Desany B."/>
            <person name="Just E."/>
            <person name="Morio T."/>
            <person name="Rost R."/>
            <person name="Churcher C.M."/>
            <person name="Cooper J."/>
            <person name="Haydock S."/>
            <person name="van Driessche N."/>
            <person name="Cronin A."/>
            <person name="Goodhead I."/>
            <person name="Muzny D.M."/>
            <person name="Mourier T."/>
            <person name="Pain A."/>
            <person name="Lu M."/>
            <person name="Harper D."/>
            <person name="Lindsay R."/>
            <person name="Hauser H."/>
            <person name="James K.D."/>
            <person name="Quiles M."/>
            <person name="Madan Babu M."/>
            <person name="Saito T."/>
            <person name="Buchrieser C."/>
            <person name="Wardroper A."/>
            <person name="Felder M."/>
            <person name="Thangavelu M."/>
            <person name="Johnson D."/>
            <person name="Knights A."/>
            <person name="Loulseged H."/>
            <person name="Mungall K.L."/>
            <person name="Oliver K."/>
            <person name="Price C."/>
            <person name="Quail M.A."/>
            <person name="Urushihara H."/>
            <person name="Hernandez J."/>
            <person name="Rabbinowitsch E."/>
            <person name="Steffen D."/>
            <person name="Sanders M."/>
            <person name="Ma J."/>
            <person name="Kohara Y."/>
            <person name="Sharp S."/>
            <person name="Simmonds M.N."/>
            <person name="Spiegler S."/>
            <person name="Tivey A."/>
            <person name="Sugano S."/>
            <person name="White B."/>
            <person name="Walker D."/>
            <person name="Woodward J.R."/>
            <person name="Winckler T."/>
            <person name="Tanaka Y."/>
            <person name="Shaulsky G."/>
            <person name="Schleicher M."/>
            <person name="Weinstock G.M."/>
            <person name="Rosenthal A."/>
            <person name="Cox E.C."/>
            <person name="Chisholm R.L."/>
            <person name="Gibbs R.A."/>
            <person name="Loomis W.F."/>
            <person name="Platzer M."/>
            <person name="Kay R.R."/>
            <person name="Williams J.G."/>
            <person name="Dear P.H."/>
            <person name="Noegel A.A."/>
            <person name="Barrell B.G."/>
            <person name="Kuspa A."/>
        </authorList>
    </citation>
    <scope>NUCLEOTIDE SEQUENCE [LARGE SCALE GENOMIC DNA]</scope>
    <source>
        <strain>AX4</strain>
    </source>
</reference>
<reference key="3">
    <citation type="journal article" date="2006" name="Eur. J. Cell Biol.">
        <title>The Dictyostelium repertoire of seven transmembrane domain receptors.</title>
        <authorList>
            <person name="Prabhu Y."/>
            <person name="Eichinger L."/>
        </authorList>
    </citation>
    <scope>NOMENCLATURE</scope>
</reference>
<reference key="4">
    <citation type="journal article" date="2007" name="BMC Dev. Biol.">
        <title>GrlJ, a Dictyostelium GABAB-like receptor with roles in post-aggregation development.</title>
        <authorList>
            <person name="Prabhu Y."/>
            <person name="Mueller R."/>
            <person name="Anjard C."/>
            <person name="Noegel A.A."/>
        </authorList>
    </citation>
    <scope>DEVELOPMENTAL STAGE</scope>
</reference>